<proteinExistence type="inferred from homology"/>
<name>RS9_PARL1</name>
<sequence length="162" mass="17773">MSETTSLEDLKGAMEGTSASADANAVPAVQKLDKFGRAYATGKRKNAVARVWIKPGSGRVKINGRDLEVYFARPVLRMILNQPLVVAAREKQYDITATVVGGGLSGQAGAIRHGISRALTYFEPSLRGVLKKEGFLTRDSRVVERKKYGKAKARRSFQFSKR</sequence>
<protein>
    <recommendedName>
        <fullName evidence="1">Small ribosomal subunit protein uS9</fullName>
    </recommendedName>
    <alternativeName>
        <fullName evidence="2">30S ribosomal protein S9</fullName>
    </alternativeName>
</protein>
<reference key="1">
    <citation type="journal article" date="2011" name="Stand. Genomic Sci.">
        <title>Complete genome sequence of Parvibaculum lavamentivorans type strain (DS-1(T)).</title>
        <authorList>
            <person name="Schleheck D."/>
            <person name="Weiss M."/>
            <person name="Pitluck S."/>
            <person name="Bruce D."/>
            <person name="Land M.L."/>
            <person name="Han S."/>
            <person name="Saunders E."/>
            <person name="Tapia R."/>
            <person name="Detter C."/>
            <person name="Brettin T."/>
            <person name="Han J."/>
            <person name="Woyke T."/>
            <person name="Goodwin L."/>
            <person name="Pennacchio L."/>
            <person name="Nolan M."/>
            <person name="Cook A.M."/>
            <person name="Kjelleberg S."/>
            <person name="Thomas T."/>
        </authorList>
    </citation>
    <scope>NUCLEOTIDE SEQUENCE [LARGE SCALE GENOMIC DNA]</scope>
    <source>
        <strain>DS-1 / DSM 13023 / NCIMB 13966</strain>
    </source>
</reference>
<dbReference type="EMBL" id="CP000774">
    <property type="protein sequence ID" value="ABS64545.1"/>
    <property type="molecule type" value="Genomic_DNA"/>
</dbReference>
<dbReference type="SMR" id="A7HXB2"/>
<dbReference type="STRING" id="402881.Plav_2938"/>
<dbReference type="KEGG" id="pla:Plav_2938"/>
<dbReference type="eggNOG" id="COG0103">
    <property type="taxonomic scope" value="Bacteria"/>
</dbReference>
<dbReference type="HOGENOM" id="CLU_046483_2_0_5"/>
<dbReference type="OrthoDB" id="9803965at2"/>
<dbReference type="Proteomes" id="UP000006377">
    <property type="component" value="Chromosome"/>
</dbReference>
<dbReference type="GO" id="GO:0022627">
    <property type="term" value="C:cytosolic small ribosomal subunit"/>
    <property type="evidence" value="ECO:0007669"/>
    <property type="project" value="TreeGrafter"/>
</dbReference>
<dbReference type="GO" id="GO:0003723">
    <property type="term" value="F:RNA binding"/>
    <property type="evidence" value="ECO:0007669"/>
    <property type="project" value="TreeGrafter"/>
</dbReference>
<dbReference type="GO" id="GO:0003735">
    <property type="term" value="F:structural constituent of ribosome"/>
    <property type="evidence" value="ECO:0007669"/>
    <property type="project" value="InterPro"/>
</dbReference>
<dbReference type="GO" id="GO:0006412">
    <property type="term" value="P:translation"/>
    <property type="evidence" value="ECO:0007669"/>
    <property type="project" value="UniProtKB-UniRule"/>
</dbReference>
<dbReference type="FunFam" id="3.30.230.10:FF:000001">
    <property type="entry name" value="30S ribosomal protein S9"/>
    <property type="match status" value="1"/>
</dbReference>
<dbReference type="Gene3D" id="3.30.230.10">
    <property type="match status" value="1"/>
</dbReference>
<dbReference type="HAMAP" id="MF_00532_B">
    <property type="entry name" value="Ribosomal_uS9_B"/>
    <property type="match status" value="1"/>
</dbReference>
<dbReference type="InterPro" id="IPR020568">
    <property type="entry name" value="Ribosomal_Su5_D2-typ_SF"/>
</dbReference>
<dbReference type="InterPro" id="IPR000754">
    <property type="entry name" value="Ribosomal_uS9"/>
</dbReference>
<dbReference type="InterPro" id="IPR023035">
    <property type="entry name" value="Ribosomal_uS9_bac/plastid"/>
</dbReference>
<dbReference type="InterPro" id="IPR020574">
    <property type="entry name" value="Ribosomal_uS9_CS"/>
</dbReference>
<dbReference type="InterPro" id="IPR014721">
    <property type="entry name" value="Ribsml_uS5_D2-typ_fold_subgr"/>
</dbReference>
<dbReference type="NCBIfam" id="NF001099">
    <property type="entry name" value="PRK00132.1"/>
    <property type="match status" value="1"/>
</dbReference>
<dbReference type="PANTHER" id="PTHR21569">
    <property type="entry name" value="RIBOSOMAL PROTEIN S9"/>
    <property type="match status" value="1"/>
</dbReference>
<dbReference type="PANTHER" id="PTHR21569:SF1">
    <property type="entry name" value="SMALL RIBOSOMAL SUBUNIT PROTEIN US9M"/>
    <property type="match status" value="1"/>
</dbReference>
<dbReference type="Pfam" id="PF00380">
    <property type="entry name" value="Ribosomal_S9"/>
    <property type="match status" value="1"/>
</dbReference>
<dbReference type="SUPFAM" id="SSF54211">
    <property type="entry name" value="Ribosomal protein S5 domain 2-like"/>
    <property type="match status" value="1"/>
</dbReference>
<dbReference type="PROSITE" id="PS00360">
    <property type="entry name" value="RIBOSOMAL_S9"/>
    <property type="match status" value="1"/>
</dbReference>
<gene>
    <name evidence="1" type="primary">rpsI</name>
    <name type="ordered locus">Plav_2938</name>
</gene>
<keyword id="KW-1185">Reference proteome</keyword>
<keyword id="KW-0687">Ribonucleoprotein</keyword>
<keyword id="KW-0689">Ribosomal protein</keyword>
<feature type="chain" id="PRO_1000072524" description="Small ribosomal subunit protein uS9">
    <location>
        <begin position="1"/>
        <end position="162"/>
    </location>
</feature>
<evidence type="ECO:0000255" key="1">
    <source>
        <dbReference type="HAMAP-Rule" id="MF_00532"/>
    </source>
</evidence>
<evidence type="ECO:0000305" key="2"/>
<comment type="similarity">
    <text evidence="1">Belongs to the universal ribosomal protein uS9 family.</text>
</comment>
<organism>
    <name type="scientific">Parvibaculum lavamentivorans (strain DS-1 / DSM 13023 / NCIMB 13966)</name>
    <dbReference type="NCBI Taxonomy" id="402881"/>
    <lineage>
        <taxon>Bacteria</taxon>
        <taxon>Pseudomonadati</taxon>
        <taxon>Pseudomonadota</taxon>
        <taxon>Alphaproteobacteria</taxon>
        <taxon>Hyphomicrobiales</taxon>
        <taxon>Parvibaculaceae</taxon>
        <taxon>Parvibaculum</taxon>
    </lineage>
</organism>
<accession>A7HXB2</accession>